<accession>B5EFP7</accession>
<organism>
    <name type="scientific">Citrifermentans bemidjiense (strain ATCC BAA-1014 / DSM 16622 / JCM 12645 / Bem)</name>
    <name type="common">Geobacter bemidjiensis</name>
    <dbReference type="NCBI Taxonomy" id="404380"/>
    <lineage>
        <taxon>Bacteria</taxon>
        <taxon>Pseudomonadati</taxon>
        <taxon>Thermodesulfobacteriota</taxon>
        <taxon>Desulfuromonadia</taxon>
        <taxon>Geobacterales</taxon>
        <taxon>Geobacteraceae</taxon>
        <taxon>Citrifermentans</taxon>
    </lineage>
</organism>
<gene>
    <name evidence="1" type="primary">fusA</name>
    <name type="ordered locus">Gbem_0930</name>
</gene>
<keyword id="KW-0963">Cytoplasm</keyword>
<keyword id="KW-0251">Elongation factor</keyword>
<keyword id="KW-0342">GTP-binding</keyword>
<keyword id="KW-0547">Nucleotide-binding</keyword>
<keyword id="KW-0648">Protein biosynthesis</keyword>
<keyword id="KW-1185">Reference proteome</keyword>
<sequence>MARQVSLEMTRNIGIMAHIDAGKTTTTERILYYTGVSHKIGEVHDGAATMDWMEQEQERGITITSAATTCNWRDHRINIIDTPGHVDFTIEVERSLRVLDGAVAVFCSVGGVEPQSETVWRQADKYRVPRIAFINKMDRVGADFFRGIAMIKDRLKANPVPLQIPIGSEENYKGLVDLIEMKGIVFNDESMGATFDTIEIPADLLEQAQEYREALIEEVSSHDDVLMEKYLGGEEISNAELKAAIRQATLDIKICPVICGSAFKNKGVQHLLDAVLDYMPAPTDIPAIQGVDANTDAPIERHASDSEPFAALGFKIMTDPFVGQLCFFRVYSGVIQSGSYVYNATKGKRERIGRILKMHANKREEIKEVYAGDIAAAVGLKYTTTGDTLCAEDHAVILESIEFPEPVISIAIEPKTKADQEKLGLSLGKLASEDPSFRVKTDEETGQTIISGMGELHLEIIVDRLFREFKVEANVGKPQVAYRETITKKVKAEGKFVRQSGGRGQFGHVWLEVEPQEAGKGYEFVDAIKGGVVPREYIPAVDKGIKEALDNGVMAGFPVVDIKVTLVDGSYHEVDSSEMAFKIAGSMGFKEGCQKASPIILEPIMSVEVVVPEEYMGDVIGDLNSRRGRIMGMEGRAGAQVVASMVPLAQMFGYSTDLRSATQGRATYSMTFDHYEPVPKSVAEEIVAKVKG</sequence>
<name>EFG_CITBB</name>
<protein>
    <recommendedName>
        <fullName evidence="1">Elongation factor G</fullName>
        <shortName evidence="1">EF-G</shortName>
    </recommendedName>
</protein>
<feature type="chain" id="PRO_1000091715" description="Elongation factor G">
    <location>
        <begin position="1"/>
        <end position="692"/>
    </location>
</feature>
<feature type="domain" description="tr-type G">
    <location>
        <begin position="8"/>
        <end position="283"/>
    </location>
</feature>
<feature type="binding site" evidence="1">
    <location>
        <begin position="17"/>
        <end position="24"/>
    </location>
    <ligand>
        <name>GTP</name>
        <dbReference type="ChEBI" id="CHEBI:37565"/>
    </ligand>
</feature>
<feature type="binding site" evidence="1">
    <location>
        <begin position="81"/>
        <end position="85"/>
    </location>
    <ligand>
        <name>GTP</name>
        <dbReference type="ChEBI" id="CHEBI:37565"/>
    </ligand>
</feature>
<feature type="binding site" evidence="1">
    <location>
        <begin position="135"/>
        <end position="138"/>
    </location>
    <ligand>
        <name>GTP</name>
        <dbReference type="ChEBI" id="CHEBI:37565"/>
    </ligand>
</feature>
<evidence type="ECO:0000255" key="1">
    <source>
        <dbReference type="HAMAP-Rule" id="MF_00054"/>
    </source>
</evidence>
<reference key="1">
    <citation type="submission" date="2008-07" db="EMBL/GenBank/DDBJ databases">
        <title>Complete sequence of Geobacter bemidjiensis BEM.</title>
        <authorList>
            <consortium name="US DOE Joint Genome Institute"/>
            <person name="Lucas S."/>
            <person name="Copeland A."/>
            <person name="Lapidus A."/>
            <person name="Glavina del Rio T."/>
            <person name="Dalin E."/>
            <person name="Tice H."/>
            <person name="Bruce D."/>
            <person name="Goodwin L."/>
            <person name="Pitluck S."/>
            <person name="Kiss H."/>
            <person name="Brettin T."/>
            <person name="Detter J.C."/>
            <person name="Han C."/>
            <person name="Kuske C.R."/>
            <person name="Schmutz J."/>
            <person name="Larimer F."/>
            <person name="Land M."/>
            <person name="Hauser L."/>
            <person name="Kyrpides N."/>
            <person name="Lykidis A."/>
            <person name="Lovley D."/>
            <person name="Richardson P."/>
        </authorList>
    </citation>
    <scope>NUCLEOTIDE SEQUENCE [LARGE SCALE GENOMIC DNA]</scope>
    <source>
        <strain>ATCC BAA-1014 / DSM 16622 / JCM 12645 / Bem</strain>
    </source>
</reference>
<comment type="function">
    <text evidence="1">Catalyzes the GTP-dependent ribosomal translocation step during translation elongation. During this step, the ribosome changes from the pre-translocational (PRE) to the post-translocational (POST) state as the newly formed A-site-bound peptidyl-tRNA and P-site-bound deacylated tRNA move to the P and E sites, respectively. Catalyzes the coordinated movement of the two tRNA molecules, the mRNA and conformational changes in the ribosome.</text>
</comment>
<comment type="subcellular location">
    <subcellularLocation>
        <location evidence="1">Cytoplasm</location>
    </subcellularLocation>
</comment>
<comment type="similarity">
    <text evidence="1">Belongs to the TRAFAC class translation factor GTPase superfamily. Classic translation factor GTPase family. EF-G/EF-2 subfamily.</text>
</comment>
<proteinExistence type="inferred from homology"/>
<dbReference type="EMBL" id="CP001124">
    <property type="protein sequence ID" value="ACH37951.1"/>
    <property type="molecule type" value="Genomic_DNA"/>
</dbReference>
<dbReference type="RefSeq" id="WP_012529363.1">
    <property type="nucleotide sequence ID" value="NC_011146.1"/>
</dbReference>
<dbReference type="SMR" id="B5EFP7"/>
<dbReference type="STRING" id="404380.Gbem_0930"/>
<dbReference type="KEGG" id="gbm:Gbem_0930"/>
<dbReference type="eggNOG" id="COG0480">
    <property type="taxonomic scope" value="Bacteria"/>
</dbReference>
<dbReference type="HOGENOM" id="CLU_002794_4_1_7"/>
<dbReference type="OrthoDB" id="9801591at2"/>
<dbReference type="Proteomes" id="UP000008825">
    <property type="component" value="Chromosome"/>
</dbReference>
<dbReference type="GO" id="GO:0005737">
    <property type="term" value="C:cytoplasm"/>
    <property type="evidence" value="ECO:0007669"/>
    <property type="project" value="UniProtKB-SubCell"/>
</dbReference>
<dbReference type="GO" id="GO:0005525">
    <property type="term" value="F:GTP binding"/>
    <property type="evidence" value="ECO:0007669"/>
    <property type="project" value="UniProtKB-UniRule"/>
</dbReference>
<dbReference type="GO" id="GO:0003924">
    <property type="term" value="F:GTPase activity"/>
    <property type="evidence" value="ECO:0007669"/>
    <property type="project" value="InterPro"/>
</dbReference>
<dbReference type="GO" id="GO:0003746">
    <property type="term" value="F:translation elongation factor activity"/>
    <property type="evidence" value="ECO:0007669"/>
    <property type="project" value="UniProtKB-UniRule"/>
</dbReference>
<dbReference type="GO" id="GO:0032790">
    <property type="term" value="P:ribosome disassembly"/>
    <property type="evidence" value="ECO:0007669"/>
    <property type="project" value="TreeGrafter"/>
</dbReference>
<dbReference type="CDD" id="cd01886">
    <property type="entry name" value="EF-G"/>
    <property type="match status" value="1"/>
</dbReference>
<dbReference type="CDD" id="cd16262">
    <property type="entry name" value="EFG_III"/>
    <property type="match status" value="1"/>
</dbReference>
<dbReference type="CDD" id="cd01434">
    <property type="entry name" value="EFG_mtEFG1_IV"/>
    <property type="match status" value="1"/>
</dbReference>
<dbReference type="CDD" id="cd03713">
    <property type="entry name" value="EFG_mtEFG_C"/>
    <property type="match status" value="1"/>
</dbReference>
<dbReference type="CDD" id="cd04088">
    <property type="entry name" value="EFG_mtEFG_II"/>
    <property type="match status" value="1"/>
</dbReference>
<dbReference type="FunFam" id="2.40.30.10:FF:000006">
    <property type="entry name" value="Elongation factor G"/>
    <property type="match status" value="1"/>
</dbReference>
<dbReference type="FunFam" id="3.30.230.10:FF:000003">
    <property type="entry name" value="Elongation factor G"/>
    <property type="match status" value="1"/>
</dbReference>
<dbReference type="FunFam" id="3.30.70.240:FF:000001">
    <property type="entry name" value="Elongation factor G"/>
    <property type="match status" value="1"/>
</dbReference>
<dbReference type="FunFam" id="3.30.70.870:FF:000001">
    <property type="entry name" value="Elongation factor G"/>
    <property type="match status" value="1"/>
</dbReference>
<dbReference type="FunFam" id="3.40.50.300:FF:000029">
    <property type="entry name" value="Elongation factor G"/>
    <property type="match status" value="1"/>
</dbReference>
<dbReference type="Gene3D" id="3.30.230.10">
    <property type="match status" value="1"/>
</dbReference>
<dbReference type="Gene3D" id="3.30.70.240">
    <property type="match status" value="1"/>
</dbReference>
<dbReference type="Gene3D" id="3.30.70.870">
    <property type="entry name" value="Elongation Factor G (Translational Gtpase), domain 3"/>
    <property type="match status" value="1"/>
</dbReference>
<dbReference type="Gene3D" id="3.40.50.300">
    <property type="entry name" value="P-loop containing nucleotide triphosphate hydrolases"/>
    <property type="match status" value="1"/>
</dbReference>
<dbReference type="Gene3D" id="2.40.30.10">
    <property type="entry name" value="Translation factors"/>
    <property type="match status" value="1"/>
</dbReference>
<dbReference type="HAMAP" id="MF_00054_B">
    <property type="entry name" value="EF_G_EF_2_B"/>
    <property type="match status" value="1"/>
</dbReference>
<dbReference type="InterPro" id="IPR041095">
    <property type="entry name" value="EFG_II"/>
</dbReference>
<dbReference type="InterPro" id="IPR009022">
    <property type="entry name" value="EFG_III"/>
</dbReference>
<dbReference type="InterPro" id="IPR035647">
    <property type="entry name" value="EFG_III/V"/>
</dbReference>
<dbReference type="InterPro" id="IPR047872">
    <property type="entry name" value="EFG_IV"/>
</dbReference>
<dbReference type="InterPro" id="IPR035649">
    <property type="entry name" value="EFG_V"/>
</dbReference>
<dbReference type="InterPro" id="IPR000640">
    <property type="entry name" value="EFG_V-like"/>
</dbReference>
<dbReference type="InterPro" id="IPR004161">
    <property type="entry name" value="EFTu-like_2"/>
</dbReference>
<dbReference type="InterPro" id="IPR031157">
    <property type="entry name" value="G_TR_CS"/>
</dbReference>
<dbReference type="InterPro" id="IPR027417">
    <property type="entry name" value="P-loop_NTPase"/>
</dbReference>
<dbReference type="InterPro" id="IPR020568">
    <property type="entry name" value="Ribosomal_Su5_D2-typ_SF"/>
</dbReference>
<dbReference type="InterPro" id="IPR014721">
    <property type="entry name" value="Ribsml_uS5_D2-typ_fold_subgr"/>
</dbReference>
<dbReference type="InterPro" id="IPR005225">
    <property type="entry name" value="Small_GTP-bd"/>
</dbReference>
<dbReference type="InterPro" id="IPR000795">
    <property type="entry name" value="T_Tr_GTP-bd_dom"/>
</dbReference>
<dbReference type="InterPro" id="IPR009000">
    <property type="entry name" value="Transl_B-barrel_sf"/>
</dbReference>
<dbReference type="InterPro" id="IPR004540">
    <property type="entry name" value="Transl_elong_EFG/EF2"/>
</dbReference>
<dbReference type="InterPro" id="IPR005517">
    <property type="entry name" value="Transl_elong_EFG/EF2_IV"/>
</dbReference>
<dbReference type="NCBIfam" id="TIGR00484">
    <property type="entry name" value="EF-G"/>
    <property type="match status" value="1"/>
</dbReference>
<dbReference type="NCBIfam" id="NF009379">
    <property type="entry name" value="PRK12740.1-3"/>
    <property type="match status" value="1"/>
</dbReference>
<dbReference type="NCBIfam" id="NF009381">
    <property type="entry name" value="PRK12740.1-5"/>
    <property type="match status" value="1"/>
</dbReference>
<dbReference type="NCBIfam" id="NF009891">
    <property type="entry name" value="PRK13351.1-1"/>
    <property type="match status" value="1"/>
</dbReference>
<dbReference type="NCBIfam" id="TIGR00231">
    <property type="entry name" value="small_GTP"/>
    <property type="match status" value="1"/>
</dbReference>
<dbReference type="PANTHER" id="PTHR43261:SF1">
    <property type="entry name" value="RIBOSOME-RELEASING FACTOR 2, MITOCHONDRIAL"/>
    <property type="match status" value="1"/>
</dbReference>
<dbReference type="PANTHER" id="PTHR43261">
    <property type="entry name" value="TRANSLATION ELONGATION FACTOR G-RELATED"/>
    <property type="match status" value="1"/>
</dbReference>
<dbReference type="Pfam" id="PF00679">
    <property type="entry name" value="EFG_C"/>
    <property type="match status" value="1"/>
</dbReference>
<dbReference type="Pfam" id="PF14492">
    <property type="entry name" value="EFG_III"/>
    <property type="match status" value="1"/>
</dbReference>
<dbReference type="Pfam" id="PF03764">
    <property type="entry name" value="EFG_IV"/>
    <property type="match status" value="1"/>
</dbReference>
<dbReference type="Pfam" id="PF00009">
    <property type="entry name" value="GTP_EFTU"/>
    <property type="match status" value="1"/>
</dbReference>
<dbReference type="Pfam" id="PF03144">
    <property type="entry name" value="GTP_EFTU_D2"/>
    <property type="match status" value="1"/>
</dbReference>
<dbReference type="PRINTS" id="PR00315">
    <property type="entry name" value="ELONGATNFCT"/>
</dbReference>
<dbReference type="SMART" id="SM00838">
    <property type="entry name" value="EFG_C"/>
    <property type="match status" value="1"/>
</dbReference>
<dbReference type="SMART" id="SM00889">
    <property type="entry name" value="EFG_IV"/>
    <property type="match status" value="1"/>
</dbReference>
<dbReference type="SUPFAM" id="SSF54980">
    <property type="entry name" value="EF-G C-terminal domain-like"/>
    <property type="match status" value="2"/>
</dbReference>
<dbReference type="SUPFAM" id="SSF52540">
    <property type="entry name" value="P-loop containing nucleoside triphosphate hydrolases"/>
    <property type="match status" value="1"/>
</dbReference>
<dbReference type="SUPFAM" id="SSF54211">
    <property type="entry name" value="Ribosomal protein S5 domain 2-like"/>
    <property type="match status" value="1"/>
</dbReference>
<dbReference type="SUPFAM" id="SSF50447">
    <property type="entry name" value="Translation proteins"/>
    <property type="match status" value="1"/>
</dbReference>
<dbReference type="PROSITE" id="PS00301">
    <property type="entry name" value="G_TR_1"/>
    <property type="match status" value="1"/>
</dbReference>
<dbReference type="PROSITE" id="PS51722">
    <property type="entry name" value="G_TR_2"/>
    <property type="match status" value="1"/>
</dbReference>